<name>DXR_PROMA</name>
<evidence type="ECO:0000255" key="1">
    <source>
        <dbReference type="HAMAP-Rule" id="MF_00183"/>
    </source>
</evidence>
<organism>
    <name type="scientific">Prochlorococcus marinus (strain SARG / CCMP1375 / SS120)</name>
    <dbReference type="NCBI Taxonomy" id="167539"/>
    <lineage>
        <taxon>Bacteria</taxon>
        <taxon>Bacillati</taxon>
        <taxon>Cyanobacteriota</taxon>
        <taxon>Cyanophyceae</taxon>
        <taxon>Synechococcales</taxon>
        <taxon>Prochlorococcaceae</taxon>
        <taxon>Prochlorococcus</taxon>
    </lineage>
</organism>
<reference key="1">
    <citation type="journal article" date="2003" name="Proc. Natl. Acad. Sci. U.S.A.">
        <title>Genome sequence of the cyanobacterium Prochlorococcus marinus SS120, a nearly minimal oxyphototrophic genome.</title>
        <authorList>
            <person name="Dufresne A."/>
            <person name="Salanoubat M."/>
            <person name="Partensky F."/>
            <person name="Artiguenave F."/>
            <person name="Axmann I.M."/>
            <person name="Barbe V."/>
            <person name="Duprat S."/>
            <person name="Galperin M.Y."/>
            <person name="Koonin E.V."/>
            <person name="Le Gall F."/>
            <person name="Makarova K.S."/>
            <person name="Ostrowski M."/>
            <person name="Oztas S."/>
            <person name="Robert C."/>
            <person name="Rogozin I.B."/>
            <person name="Scanlan D.J."/>
            <person name="Tandeau de Marsac N."/>
            <person name="Weissenbach J."/>
            <person name="Wincker P."/>
            <person name="Wolf Y.I."/>
            <person name="Hess W.R."/>
        </authorList>
    </citation>
    <scope>NUCLEOTIDE SEQUENCE [LARGE SCALE GENOMIC DNA]</scope>
    <source>
        <strain>SARG / CCMP1375 / SS120</strain>
    </source>
</reference>
<gene>
    <name evidence="1" type="primary">dxr</name>
    <name type="ordered locus">Pro_1236</name>
</gene>
<sequence>MLGSTGSIGTQTLEIAKECPEQFKVVALTAGRNLDLLIKQIQEHQPEVVALARKDILPELQERLNSLTGKERPNALPHLVAGNDGLNIAASWHSADLVVTGIVGCAGLLPTLAAIKAGKDIALANKETLIAAGPVVIPELKRSGSRLLPADSEHSAIFQCLQGTPWPENARLSTGIPTPGLRNIQLTASGGAFRDWATEDLKHASIKDATSHPNWSMGKKITVDSATLMNKGLEVIEAHYLFGLDYDHIEIVIHPQSIIHSMIELNDSSVLAQMGWPDMKLPILYAMSWPNRINTSWRRLNLSEIGKLTFHEPDTSKYPCMELAYAAGKAAGTMPAVLNAANEEAVALFLEEKIHFLNIPKVIEAACENHKKDLKFDPQLQDVIEVDYWARREVRSQVQKDSNQITMATYKK</sequence>
<proteinExistence type="inferred from homology"/>
<comment type="function">
    <text evidence="1">Catalyzes the NADPH-dependent rearrangement and reduction of 1-deoxy-D-xylulose-5-phosphate (DXP) to 2-C-methyl-D-erythritol 4-phosphate (MEP).</text>
</comment>
<comment type="catalytic activity">
    <reaction evidence="1">
        <text>2-C-methyl-D-erythritol 4-phosphate + NADP(+) = 1-deoxy-D-xylulose 5-phosphate + NADPH + H(+)</text>
        <dbReference type="Rhea" id="RHEA:13717"/>
        <dbReference type="ChEBI" id="CHEBI:15378"/>
        <dbReference type="ChEBI" id="CHEBI:57783"/>
        <dbReference type="ChEBI" id="CHEBI:57792"/>
        <dbReference type="ChEBI" id="CHEBI:58262"/>
        <dbReference type="ChEBI" id="CHEBI:58349"/>
        <dbReference type="EC" id="1.1.1.267"/>
    </reaction>
    <physiologicalReaction direction="right-to-left" evidence="1">
        <dbReference type="Rhea" id="RHEA:13719"/>
    </physiologicalReaction>
</comment>
<comment type="cofactor">
    <cofactor evidence="1">
        <name>Mg(2+)</name>
        <dbReference type="ChEBI" id="CHEBI:18420"/>
    </cofactor>
    <cofactor evidence="1">
        <name>Mn(2+)</name>
        <dbReference type="ChEBI" id="CHEBI:29035"/>
    </cofactor>
</comment>
<comment type="pathway">
    <text evidence="1">Isoprenoid biosynthesis; isopentenyl diphosphate biosynthesis via DXP pathway; isopentenyl diphosphate from 1-deoxy-D-xylulose 5-phosphate: step 1/6.</text>
</comment>
<comment type="similarity">
    <text evidence="1">Belongs to the DXR family.</text>
</comment>
<protein>
    <recommendedName>
        <fullName evidence="1">1-deoxy-D-xylulose 5-phosphate reductoisomerase</fullName>
        <shortName evidence="1">DXP reductoisomerase</shortName>
        <ecNumber evidence="1">1.1.1.267</ecNumber>
    </recommendedName>
    <alternativeName>
        <fullName evidence="1">1-deoxyxylulose-5-phosphate reductoisomerase</fullName>
    </alternativeName>
    <alternativeName>
        <fullName evidence="1">2-C-methyl-D-erythritol 4-phosphate synthase</fullName>
    </alternativeName>
</protein>
<feature type="chain" id="PRO_0000163692" description="1-deoxy-D-xylulose 5-phosphate reductoisomerase">
    <location>
        <begin position="1"/>
        <end position="412"/>
    </location>
</feature>
<feature type="binding site" evidence="1">
    <location>
        <position position="5"/>
    </location>
    <ligand>
        <name>NADPH</name>
        <dbReference type="ChEBI" id="CHEBI:57783"/>
    </ligand>
</feature>
<feature type="binding site" evidence="1">
    <location>
        <position position="6"/>
    </location>
    <ligand>
        <name>NADPH</name>
        <dbReference type="ChEBI" id="CHEBI:57783"/>
    </ligand>
</feature>
<feature type="binding site" evidence="1">
    <location>
        <position position="7"/>
    </location>
    <ligand>
        <name>NADPH</name>
        <dbReference type="ChEBI" id="CHEBI:57783"/>
    </ligand>
</feature>
<feature type="binding site" evidence="1">
    <location>
        <position position="8"/>
    </location>
    <ligand>
        <name>NADPH</name>
        <dbReference type="ChEBI" id="CHEBI:57783"/>
    </ligand>
</feature>
<feature type="binding site" evidence="1">
    <location>
        <position position="31"/>
    </location>
    <ligand>
        <name>NADPH</name>
        <dbReference type="ChEBI" id="CHEBI:57783"/>
    </ligand>
</feature>
<feature type="binding site" evidence="1">
    <location>
        <position position="32"/>
    </location>
    <ligand>
        <name>NADPH</name>
        <dbReference type="ChEBI" id="CHEBI:57783"/>
    </ligand>
</feature>
<feature type="binding site" evidence="1">
    <location>
        <position position="33"/>
    </location>
    <ligand>
        <name>NADPH</name>
        <dbReference type="ChEBI" id="CHEBI:57783"/>
    </ligand>
</feature>
<feature type="binding site" evidence="1">
    <location>
        <position position="125"/>
    </location>
    <ligand>
        <name>NADPH</name>
        <dbReference type="ChEBI" id="CHEBI:57783"/>
    </ligand>
</feature>
<feature type="binding site" evidence="1">
    <location>
        <position position="126"/>
    </location>
    <ligand>
        <name>1-deoxy-D-xylulose 5-phosphate</name>
        <dbReference type="ChEBI" id="CHEBI:57792"/>
    </ligand>
</feature>
<feature type="binding site" evidence="1">
    <location>
        <position position="127"/>
    </location>
    <ligand>
        <name>NADPH</name>
        <dbReference type="ChEBI" id="CHEBI:57783"/>
    </ligand>
</feature>
<feature type="binding site" evidence="1">
    <location>
        <position position="151"/>
    </location>
    <ligand>
        <name>Mn(2+)</name>
        <dbReference type="ChEBI" id="CHEBI:29035"/>
    </ligand>
</feature>
<feature type="binding site" evidence="1">
    <location>
        <position position="152"/>
    </location>
    <ligand>
        <name>1-deoxy-D-xylulose 5-phosphate</name>
        <dbReference type="ChEBI" id="CHEBI:57792"/>
    </ligand>
</feature>
<feature type="binding site" evidence="1">
    <location>
        <position position="153"/>
    </location>
    <ligand>
        <name>1-deoxy-D-xylulose 5-phosphate</name>
        <dbReference type="ChEBI" id="CHEBI:57792"/>
    </ligand>
</feature>
<feature type="binding site" evidence="1">
    <location>
        <position position="153"/>
    </location>
    <ligand>
        <name>Mn(2+)</name>
        <dbReference type="ChEBI" id="CHEBI:29035"/>
    </ligand>
</feature>
<feature type="binding site" evidence="1">
    <location>
        <position position="189"/>
    </location>
    <ligand>
        <name>1-deoxy-D-xylulose 5-phosphate</name>
        <dbReference type="ChEBI" id="CHEBI:57792"/>
    </ligand>
</feature>
<feature type="binding site" evidence="1">
    <location>
        <position position="212"/>
    </location>
    <ligand>
        <name>1-deoxy-D-xylulose 5-phosphate</name>
        <dbReference type="ChEBI" id="CHEBI:57792"/>
    </ligand>
</feature>
<feature type="binding site" evidence="1">
    <location>
        <position position="218"/>
    </location>
    <ligand>
        <name>NADPH</name>
        <dbReference type="ChEBI" id="CHEBI:57783"/>
    </ligand>
</feature>
<feature type="binding site" evidence="1">
    <location>
        <position position="225"/>
    </location>
    <ligand>
        <name>1-deoxy-D-xylulose 5-phosphate</name>
        <dbReference type="ChEBI" id="CHEBI:57792"/>
    </ligand>
</feature>
<feature type="binding site" evidence="1">
    <location>
        <position position="230"/>
    </location>
    <ligand>
        <name>1-deoxy-D-xylulose 5-phosphate</name>
        <dbReference type="ChEBI" id="CHEBI:57792"/>
    </ligand>
</feature>
<feature type="binding site" evidence="1">
    <location>
        <position position="231"/>
    </location>
    <ligand>
        <name>1-deoxy-D-xylulose 5-phosphate</name>
        <dbReference type="ChEBI" id="CHEBI:57792"/>
    </ligand>
</feature>
<feature type="binding site" evidence="1">
    <location>
        <position position="234"/>
    </location>
    <ligand>
        <name>1-deoxy-D-xylulose 5-phosphate</name>
        <dbReference type="ChEBI" id="CHEBI:57792"/>
    </ligand>
</feature>
<feature type="binding site" evidence="1">
    <location>
        <position position="234"/>
    </location>
    <ligand>
        <name>Mn(2+)</name>
        <dbReference type="ChEBI" id="CHEBI:29035"/>
    </ligand>
</feature>
<accession>Q7VB62</accession>
<dbReference type="EC" id="1.1.1.267" evidence="1"/>
<dbReference type="EMBL" id="AE017126">
    <property type="protein sequence ID" value="AAQ00281.1"/>
    <property type="molecule type" value="Genomic_DNA"/>
</dbReference>
<dbReference type="RefSeq" id="NP_875628.1">
    <property type="nucleotide sequence ID" value="NC_005042.1"/>
</dbReference>
<dbReference type="SMR" id="Q7VB62"/>
<dbReference type="STRING" id="167539.Pro_1236"/>
<dbReference type="EnsemblBacteria" id="AAQ00281">
    <property type="protein sequence ID" value="AAQ00281"/>
    <property type="gene ID" value="Pro_1236"/>
</dbReference>
<dbReference type="KEGG" id="pma:Pro_1236"/>
<dbReference type="PATRIC" id="fig|167539.5.peg.1299"/>
<dbReference type="eggNOG" id="COG0743">
    <property type="taxonomic scope" value="Bacteria"/>
</dbReference>
<dbReference type="HOGENOM" id="CLU_035714_4_0_3"/>
<dbReference type="OrthoDB" id="9806546at2"/>
<dbReference type="UniPathway" id="UPA00056">
    <property type="reaction ID" value="UER00092"/>
</dbReference>
<dbReference type="Proteomes" id="UP000001420">
    <property type="component" value="Chromosome"/>
</dbReference>
<dbReference type="GO" id="GO:0030604">
    <property type="term" value="F:1-deoxy-D-xylulose-5-phosphate reductoisomerase activity"/>
    <property type="evidence" value="ECO:0007669"/>
    <property type="project" value="UniProtKB-UniRule"/>
</dbReference>
<dbReference type="GO" id="GO:0030145">
    <property type="term" value="F:manganese ion binding"/>
    <property type="evidence" value="ECO:0007669"/>
    <property type="project" value="TreeGrafter"/>
</dbReference>
<dbReference type="GO" id="GO:0070402">
    <property type="term" value="F:NADPH binding"/>
    <property type="evidence" value="ECO:0007669"/>
    <property type="project" value="InterPro"/>
</dbReference>
<dbReference type="GO" id="GO:0051484">
    <property type="term" value="P:isopentenyl diphosphate biosynthetic process, methylerythritol 4-phosphate pathway involved in terpenoid biosynthetic process"/>
    <property type="evidence" value="ECO:0007669"/>
    <property type="project" value="TreeGrafter"/>
</dbReference>
<dbReference type="FunFam" id="3.40.50.720:FF:000045">
    <property type="entry name" value="1-deoxy-D-xylulose 5-phosphate reductoisomerase"/>
    <property type="match status" value="1"/>
</dbReference>
<dbReference type="Gene3D" id="1.10.1740.10">
    <property type="match status" value="1"/>
</dbReference>
<dbReference type="Gene3D" id="3.40.50.720">
    <property type="entry name" value="NAD(P)-binding Rossmann-like Domain"/>
    <property type="match status" value="1"/>
</dbReference>
<dbReference type="HAMAP" id="MF_00183">
    <property type="entry name" value="DXP_reductoisom"/>
    <property type="match status" value="1"/>
</dbReference>
<dbReference type="InterPro" id="IPR003821">
    <property type="entry name" value="DXP_reductoisomerase"/>
</dbReference>
<dbReference type="InterPro" id="IPR013644">
    <property type="entry name" value="DXP_reductoisomerase_C"/>
</dbReference>
<dbReference type="InterPro" id="IPR013512">
    <property type="entry name" value="DXP_reductoisomerase_N"/>
</dbReference>
<dbReference type="InterPro" id="IPR026877">
    <property type="entry name" value="DXPR_C"/>
</dbReference>
<dbReference type="InterPro" id="IPR036169">
    <property type="entry name" value="DXPR_C_sf"/>
</dbReference>
<dbReference type="InterPro" id="IPR036291">
    <property type="entry name" value="NAD(P)-bd_dom_sf"/>
</dbReference>
<dbReference type="NCBIfam" id="TIGR00243">
    <property type="entry name" value="Dxr"/>
    <property type="match status" value="1"/>
</dbReference>
<dbReference type="NCBIfam" id="NF009114">
    <property type="entry name" value="PRK12464.1"/>
    <property type="match status" value="1"/>
</dbReference>
<dbReference type="PANTHER" id="PTHR30525">
    <property type="entry name" value="1-DEOXY-D-XYLULOSE 5-PHOSPHATE REDUCTOISOMERASE"/>
    <property type="match status" value="1"/>
</dbReference>
<dbReference type="PANTHER" id="PTHR30525:SF0">
    <property type="entry name" value="1-DEOXY-D-XYLULOSE 5-PHOSPHATE REDUCTOISOMERASE, CHLOROPLASTIC"/>
    <property type="match status" value="1"/>
</dbReference>
<dbReference type="Pfam" id="PF08436">
    <property type="entry name" value="DXP_redisom_C"/>
    <property type="match status" value="1"/>
</dbReference>
<dbReference type="Pfam" id="PF02670">
    <property type="entry name" value="DXP_reductoisom"/>
    <property type="match status" value="1"/>
</dbReference>
<dbReference type="Pfam" id="PF13288">
    <property type="entry name" value="DXPR_C"/>
    <property type="match status" value="1"/>
</dbReference>
<dbReference type="PIRSF" id="PIRSF006205">
    <property type="entry name" value="Dxp_reductismrs"/>
    <property type="match status" value="1"/>
</dbReference>
<dbReference type="SUPFAM" id="SSF69055">
    <property type="entry name" value="1-deoxy-D-xylulose-5-phosphate reductoisomerase, C-terminal domain"/>
    <property type="match status" value="1"/>
</dbReference>
<dbReference type="SUPFAM" id="SSF55347">
    <property type="entry name" value="Glyceraldehyde-3-phosphate dehydrogenase-like, C-terminal domain"/>
    <property type="match status" value="1"/>
</dbReference>
<dbReference type="SUPFAM" id="SSF51735">
    <property type="entry name" value="NAD(P)-binding Rossmann-fold domains"/>
    <property type="match status" value="1"/>
</dbReference>
<keyword id="KW-0414">Isoprene biosynthesis</keyword>
<keyword id="KW-0464">Manganese</keyword>
<keyword id="KW-0479">Metal-binding</keyword>
<keyword id="KW-0521">NADP</keyword>
<keyword id="KW-0560">Oxidoreductase</keyword>
<keyword id="KW-1185">Reference proteome</keyword>